<protein>
    <recommendedName>
        <fullName>Carnitine transport binding protein OpuCC</fullName>
    </recommendedName>
</protein>
<dbReference type="EMBL" id="CP002002">
    <property type="protein sequence ID" value="AEO06411.1"/>
    <property type="molecule type" value="Genomic_DNA"/>
</dbReference>
<dbReference type="RefSeq" id="WP_003721931.1">
    <property type="nucleotide sequence ID" value="NC_017544.1"/>
</dbReference>
<dbReference type="SMR" id="G2JZ42"/>
<dbReference type="KEGG" id="lmt:LMRG_00878"/>
<dbReference type="HOGENOM" id="CLU_038355_1_0_9"/>
<dbReference type="Proteomes" id="UP000001288">
    <property type="component" value="Chromosome"/>
</dbReference>
<dbReference type="GO" id="GO:0043190">
    <property type="term" value="C:ATP-binding cassette (ABC) transporter complex"/>
    <property type="evidence" value="ECO:0007669"/>
    <property type="project" value="InterPro"/>
</dbReference>
<dbReference type="GO" id="GO:0022857">
    <property type="term" value="F:transmembrane transporter activity"/>
    <property type="evidence" value="ECO:0007669"/>
    <property type="project" value="InterPro"/>
</dbReference>
<dbReference type="CDD" id="cd13608">
    <property type="entry name" value="PBP2_OpuCC_like"/>
    <property type="match status" value="1"/>
</dbReference>
<dbReference type="Gene3D" id="3.40.190.120">
    <property type="entry name" value="Osmoprotection protein (prox), domain 2"/>
    <property type="match status" value="1"/>
</dbReference>
<dbReference type="Gene3D" id="3.40.190.10">
    <property type="entry name" value="Periplasmic binding protein-like II"/>
    <property type="match status" value="1"/>
</dbReference>
<dbReference type="InterPro" id="IPR007210">
    <property type="entry name" value="ABC_Gly_betaine_transp_sub-bd"/>
</dbReference>
<dbReference type="PANTHER" id="PTHR30024">
    <property type="entry name" value="ALIPHATIC SULFONATES-BINDING PROTEIN-RELATED"/>
    <property type="match status" value="1"/>
</dbReference>
<dbReference type="PANTHER" id="PTHR30024:SF44">
    <property type="entry name" value="CHOLINE-BINDING PROTEIN"/>
    <property type="match status" value="1"/>
</dbReference>
<dbReference type="Pfam" id="PF04069">
    <property type="entry name" value="OpuAC"/>
    <property type="match status" value="1"/>
</dbReference>
<dbReference type="SUPFAM" id="SSF53850">
    <property type="entry name" value="Periplasmic binding protein-like II"/>
    <property type="match status" value="1"/>
</dbReference>
<dbReference type="PROSITE" id="PS51257">
    <property type="entry name" value="PROKAR_LIPOPROTEIN"/>
    <property type="match status" value="1"/>
</dbReference>
<proteinExistence type="evidence at protein level"/>
<keyword id="KW-1003">Cell membrane</keyword>
<keyword id="KW-0449">Lipoprotein</keyword>
<keyword id="KW-0472">Membrane</keyword>
<keyword id="KW-0564">Palmitate</keyword>
<keyword id="KW-0732">Signal</keyword>
<keyword id="KW-0346">Stress response</keyword>
<keyword id="KW-0813">Transport</keyword>
<gene>
    <name type="primary">opuCC</name>
    <name type="ordered locus">LMRG_00878</name>
</gene>
<organism>
    <name type="scientific">Listeria monocytogenes serotype 1/2a (strain 10403S)</name>
    <dbReference type="NCBI Taxonomy" id="393133"/>
    <lineage>
        <taxon>Bacteria</taxon>
        <taxon>Bacillati</taxon>
        <taxon>Bacillota</taxon>
        <taxon>Bacilli</taxon>
        <taxon>Bacillales</taxon>
        <taxon>Listeriaceae</taxon>
        <taxon>Listeria</taxon>
    </lineage>
</organism>
<reference key="1">
    <citation type="submission" date="2010-04" db="EMBL/GenBank/DDBJ databases">
        <title>The genome sequence of Listeria monocytogenes strain 10403S.</title>
        <authorList>
            <consortium name="The Broad Institute Genome Sequencing Platform"/>
            <consortium name="The Broad Institute Genome Sequencing Center for Infectious Disease"/>
            <person name="Borowsky M."/>
            <person name="Borodovsky M."/>
            <person name="Young S.K."/>
            <person name="Zeng Q."/>
            <person name="Koehrsen M."/>
            <person name="Fitzgerald M."/>
            <person name="Wiedmann M."/>
            <person name="Swaminathan B."/>
            <person name="Lauer P."/>
            <person name="Portnoy D."/>
            <person name="Cossart P."/>
            <person name="Buchrieser C."/>
            <person name="Higgins D."/>
            <person name="Abouelleil A."/>
            <person name="Alvarado L."/>
            <person name="Arachchi H.M."/>
            <person name="Berlin A."/>
            <person name="Borenstein D."/>
            <person name="Brown A."/>
            <person name="Chapman S.B."/>
            <person name="Chen Z."/>
            <person name="Dunbar C.D."/>
            <person name="Engels R."/>
            <person name="Freedman E."/>
            <person name="Gearin G."/>
            <person name="Gellesch M."/>
            <person name="Goldberg J."/>
            <person name="Griggs A."/>
            <person name="Gujja S."/>
            <person name="Heilman E."/>
            <person name="Heiman D."/>
            <person name="Howarth C."/>
            <person name="Jen D."/>
            <person name="Larson L."/>
            <person name="Lui A."/>
            <person name="MacDonald J."/>
            <person name="Mehta T."/>
            <person name="Montmayeur A."/>
            <person name="Neiman D."/>
            <person name="Park D."/>
            <person name="Pearson M."/>
            <person name="Priest M."/>
            <person name="Richards J."/>
            <person name="Roberts A."/>
            <person name="Saif S."/>
            <person name="Shea T."/>
            <person name="Shenoy N."/>
            <person name="Sisk P."/>
            <person name="Stolte C."/>
            <person name="Sykes S."/>
            <person name="Walk T."/>
            <person name="White J."/>
            <person name="Yandava C."/>
            <person name="Haas B."/>
            <person name="Nusbaum C."/>
            <person name="Birren B."/>
        </authorList>
    </citation>
    <scope>NUCLEOTIDE SEQUENCE [LARGE SCALE GENOMIC DNA]</scope>
    <source>
        <strain>10403S</strain>
    </source>
</reference>
<reference key="2">
    <citation type="journal article" date="2002" name="Appl. Environ. Microbiol.">
        <title>Identification of opuC as a chill-activated and osmotically activated carnitine transporter in Listeria monocytogenes.</title>
        <authorList>
            <person name="Angelidis A.S."/>
            <person name="Smith L.T."/>
            <person name="Hoffman L.M."/>
            <person name="Smith G.M."/>
        </authorList>
    </citation>
    <scope>FUNCTION</scope>
    <scope>INDUCTION</scope>
    <scope>SUBUNIT</scope>
    <source>
        <strain>10403S</strain>
    </source>
</reference>
<reference key="3">
    <citation type="journal article" date="2002" name="Appl. Environ. Microbiol.">
        <title>Gbu glycine betaine porter and carnitine uptake in osmotically stressed Listeria monocytogenes cells.</title>
        <authorList>
            <person name="Mendum M.L."/>
            <person name="Smith L.T."/>
        </authorList>
    </citation>
    <scope>FUNCTION IN CARNITINE UPTAKE</scope>
    <source>
        <strain>10403S</strain>
    </source>
</reference>
<reference key="4">
    <citation type="journal article" date="2003" name="Appl. Environ. Microbiol.">
        <title>Three transporters mediate uptake of glycine betaine and carnitine by Listeria monocytogenes in response to hyperosmotic stress.</title>
        <authorList>
            <person name="Angelidis A.S."/>
            <person name="Smith G.M."/>
        </authorList>
    </citation>
    <scope>FUNCTION IN CARNITINE AND GLYCINE BETAINE UPTAKE</scope>
    <scope>INDUCTION</scope>
    <source>
        <strain>10403S</strain>
    </source>
</reference>
<reference key="5">
    <citation type="journal article" date="2003" name="Appl. Environ. Microbiol.">
        <title>Role of sigmaB in regulating the compatible solute uptake systems of Listeria monocytogenes: osmotic induction of opuC is sigmaB dependent.</title>
        <authorList>
            <person name="Fraser K.R."/>
            <person name="Sue D."/>
            <person name="Wiedmann M."/>
            <person name="Boor K."/>
            <person name="O'Byrne C.P."/>
        </authorList>
    </citation>
    <scope>INDUCTION</scope>
    <source>
        <strain>10403S</strain>
    </source>
</reference>
<sequence>MKKKFIALFSVLLLTSSLFLSSCSLPGLGGSSKDTIRIGAMATTESQIVSNILKELIEHDTGLKVEIVNNLGSTIVQHQAMLNGDVDITATRYTGTDLVGPLGEEAIKDPEKALAAVKKGFEERFHQTWFDSYGFANTYVFMVRQDTAKKYNLNTVSDMRKVENELTAGVDNSWMEREGDGYKAFSKAYDIEFKKIFPMQIGLIYTALKNNQMDVALGYSTDGRIPTYNLKLLKDDKKFFPPYDASALATDEILKKHPELKTTINKLKGKISTEEMQKLNYEADGKLKEPSIVAQEFLQKNNYFEGKN</sequence>
<accession>G2JZ42</accession>
<comment type="function">
    <text evidence="2 3 4">Part of the ABC transporter complex OpuCABCD involved in carnitine uptake. Involved, with BetL and GbuABC, in osmoprotection and cryoprotection of Listeria. Can also mediate weak glycine betaine transport.</text>
</comment>
<comment type="subunit">
    <text evidence="7">The complex is composed of two ATP-binding proteins (OpuCA), two transmembrane proteins (OpuCB and OpuCD) and a solute-binding protein (OpuCC).</text>
</comment>
<comment type="subcellular location">
    <subcellularLocation>
        <location evidence="1">Cell membrane</location>
        <topology evidence="1">Lipid-anchor</topology>
    </subcellularLocation>
</comment>
<comment type="induction">
    <text evidence="2 4 5">The complex is induced by either hyperosmotic stress or by low temperature. Osmotic induction is sigma B-dependent.</text>
</comment>
<comment type="similarity">
    <text evidence="6">Belongs to the OsmX family.</text>
</comment>
<feature type="signal peptide" evidence="1">
    <location>
        <begin position="1"/>
        <end position="22"/>
    </location>
</feature>
<feature type="chain" id="PRO_0000418139" description="Carnitine transport binding protein OpuCC">
    <location>
        <begin position="23"/>
        <end position="308"/>
    </location>
</feature>
<feature type="lipid moiety-binding region" description="N-palmitoyl cysteine" evidence="1">
    <location>
        <position position="23"/>
    </location>
</feature>
<feature type="lipid moiety-binding region" description="S-diacylglycerol cysteine" evidence="1">
    <location>
        <position position="23"/>
    </location>
</feature>
<name>OPUCC_LISM4</name>
<evidence type="ECO:0000255" key="1">
    <source>
        <dbReference type="PROSITE-ProRule" id="PRU00303"/>
    </source>
</evidence>
<evidence type="ECO:0000269" key="2">
    <source>
    </source>
</evidence>
<evidence type="ECO:0000269" key="3">
    <source>
    </source>
</evidence>
<evidence type="ECO:0000269" key="4">
    <source>
    </source>
</evidence>
<evidence type="ECO:0000269" key="5">
    <source>
    </source>
</evidence>
<evidence type="ECO:0000305" key="6"/>
<evidence type="ECO:0000305" key="7">
    <source>
    </source>
</evidence>